<name>DAPE_RICPU</name>
<sequence>MYINYLKDLIGFKSVTPKSDGAIEYINDLLKQHGFKTEIKIFGDSKSEQVTNLYAVFGSNEPNICFVGHVDVVLAGNHELWHNASPFKVSQQDGKIYGRGAVDMKGAIACFLAASLDFIKNNTDFKGSISFLLTSDEEGKAKHGTKEMLQYIYDQGYKINFAIVGEPTCEKEIGDAIKIGRRGSVNFKLNIEGLSGHVAYPHKANNPLPCLIIILNELTNIKLDEGTEFFQRSNLEVTNIEVSNNTSNVIPASTEASFNIRFNNLHSAETLAKQVEEIIKQHCKEYKVDYKLEYSSSAESFIQNPSDKIKEFAKVVEHTLKIKPEFSTSGGTSDARFVKNYCPLVEFGLLSETAHKINEYTKISDLQKLYDVYYNFLMEIL</sequence>
<comment type="function">
    <text evidence="1">Catalyzes the hydrolysis of N-succinyl-L,L-diaminopimelic acid (SDAP), forming succinate and LL-2,6-diaminopimelate (DAP), an intermediate involved in the bacterial biosynthesis of lysine and meso-diaminopimelic acid, an essential component of bacterial cell walls.</text>
</comment>
<comment type="catalytic activity">
    <reaction evidence="1">
        <text>N-succinyl-(2S,6S)-2,6-diaminopimelate + H2O = (2S,6S)-2,6-diaminopimelate + succinate</text>
        <dbReference type="Rhea" id="RHEA:22608"/>
        <dbReference type="ChEBI" id="CHEBI:15377"/>
        <dbReference type="ChEBI" id="CHEBI:30031"/>
        <dbReference type="ChEBI" id="CHEBI:57609"/>
        <dbReference type="ChEBI" id="CHEBI:58087"/>
        <dbReference type="EC" id="3.5.1.18"/>
    </reaction>
</comment>
<comment type="cofactor">
    <cofactor evidence="1">
        <name>Zn(2+)</name>
        <dbReference type="ChEBI" id="CHEBI:29105"/>
    </cofactor>
    <cofactor evidence="1">
        <name>Co(2+)</name>
        <dbReference type="ChEBI" id="CHEBI:48828"/>
    </cofactor>
    <text evidence="1">Binds 2 Zn(2+) or Co(2+) ions per subunit.</text>
</comment>
<comment type="pathway">
    <text evidence="1">Amino-acid biosynthesis; L-lysine biosynthesis via DAP pathway; LL-2,6-diaminopimelate from (S)-tetrahydrodipicolinate (succinylase route): step 3/3.</text>
</comment>
<comment type="subunit">
    <text evidence="1">Homodimer.</text>
</comment>
<comment type="similarity">
    <text evidence="1">Belongs to the peptidase M20A family. DapE subfamily.</text>
</comment>
<evidence type="ECO:0000255" key="1">
    <source>
        <dbReference type="HAMAP-Rule" id="MF_01690"/>
    </source>
</evidence>
<reference key="1">
    <citation type="journal article" date="2009" name="PLoS ONE">
        <title>Genome sequence of the endosymbiont Rickettsia peacockii and comparison with virulent Rickettsia rickettsii: identification of virulence factors.</title>
        <authorList>
            <person name="Felsheim R.F."/>
            <person name="Kurtti T.J."/>
            <person name="Munderloh U.G."/>
        </authorList>
    </citation>
    <scope>NUCLEOTIDE SEQUENCE [LARGE SCALE GENOMIC DNA]</scope>
    <source>
        <strain>Rustic</strain>
    </source>
</reference>
<proteinExistence type="inferred from homology"/>
<keyword id="KW-0028">Amino-acid biosynthesis</keyword>
<keyword id="KW-0170">Cobalt</keyword>
<keyword id="KW-0220">Diaminopimelate biosynthesis</keyword>
<keyword id="KW-0378">Hydrolase</keyword>
<keyword id="KW-0457">Lysine biosynthesis</keyword>
<keyword id="KW-0479">Metal-binding</keyword>
<keyword id="KW-0862">Zinc</keyword>
<protein>
    <recommendedName>
        <fullName evidence="1">Succinyl-diaminopimelate desuccinylase</fullName>
        <shortName evidence="1">SDAP desuccinylase</shortName>
        <ecNumber evidence="1">3.5.1.18</ecNumber>
    </recommendedName>
    <alternativeName>
        <fullName evidence="1">N-succinyl-LL-2,6-diaminoheptanedioate amidohydrolase</fullName>
    </alternativeName>
</protein>
<dbReference type="EC" id="3.5.1.18" evidence="1"/>
<dbReference type="EMBL" id="CP001227">
    <property type="protein sequence ID" value="ACR47923.1"/>
    <property type="molecule type" value="Genomic_DNA"/>
</dbReference>
<dbReference type="RefSeq" id="WP_012720113.1">
    <property type="nucleotide sequence ID" value="NC_012730.1"/>
</dbReference>
<dbReference type="SMR" id="C4K2X8"/>
<dbReference type="GeneID" id="928496"/>
<dbReference type="KEGG" id="rpk:RPR_07630"/>
<dbReference type="HOGENOM" id="CLU_021802_4_0_5"/>
<dbReference type="UniPathway" id="UPA00034">
    <property type="reaction ID" value="UER00021"/>
</dbReference>
<dbReference type="Proteomes" id="UP000005015">
    <property type="component" value="Chromosome"/>
</dbReference>
<dbReference type="GO" id="GO:0008777">
    <property type="term" value="F:acetylornithine deacetylase activity"/>
    <property type="evidence" value="ECO:0007669"/>
    <property type="project" value="TreeGrafter"/>
</dbReference>
<dbReference type="GO" id="GO:0050897">
    <property type="term" value="F:cobalt ion binding"/>
    <property type="evidence" value="ECO:0007669"/>
    <property type="project" value="UniProtKB-UniRule"/>
</dbReference>
<dbReference type="GO" id="GO:0009014">
    <property type="term" value="F:succinyl-diaminopimelate desuccinylase activity"/>
    <property type="evidence" value="ECO:0007669"/>
    <property type="project" value="UniProtKB-UniRule"/>
</dbReference>
<dbReference type="GO" id="GO:0008270">
    <property type="term" value="F:zinc ion binding"/>
    <property type="evidence" value="ECO:0007669"/>
    <property type="project" value="UniProtKB-UniRule"/>
</dbReference>
<dbReference type="GO" id="GO:0019877">
    <property type="term" value="P:diaminopimelate biosynthetic process"/>
    <property type="evidence" value="ECO:0007669"/>
    <property type="project" value="UniProtKB-UniRule"/>
</dbReference>
<dbReference type="GO" id="GO:0006526">
    <property type="term" value="P:L-arginine biosynthetic process"/>
    <property type="evidence" value="ECO:0007669"/>
    <property type="project" value="TreeGrafter"/>
</dbReference>
<dbReference type="GO" id="GO:0009089">
    <property type="term" value="P:lysine biosynthetic process via diaminopimelate"/>
    <property type="evidence" value="ECO:0007669"/>
    <property type="project" value="UniProtKB-UniRule"/>
</dbReference>
<dbReference type="CDD" id="cd03891">
    <property type="entry name" value="M20_DapE_proteobac"/>
    <property type="match status" value="1"/>
</dbReference>
<dbReference type="Gene3D" id="3.30.70.360">
    <property type="match status" value="1"/>
</dbReference>
<dbReference type="Gene3D" id="3.40.630.10">
    <property type="entry name" value="Zn peptidases"/>
    <property type="match status" value="1"/>
</dbReference>
<dbReference type="HAMAP" id="MF_01690">
    <property type="entry name" value="DapE"/>
    <property type="match status" value="1"/>
</dbReference>
<dbReference type="InterPro" id="IPR001261">
    <property type="entry name" value="ArgE/DapE_CS"/>
</dbReference>
<dbReference type="InterPro" id="IPR036264">
    <property type="entry name" value="Bact_exopeptidase_dim_dom"/>
</dbReference>
<dbReference type="InterPro" id="IPR005941">
    <property type="entry name" value="DapE_proteobac"/>
</dbReference>
<dbReference type="InterPro" id="IPR002933">
    <property type="entry name" value="Peptidase_M20"/>
</dbReference>
<dbReference type="InterPro" id="IPR011650">
    <property type="entry name" value="Peptidase_M20_dimer"/>
</dbReference>
<dbReference type="InterPro" id="IPR050072">
    <property type="entry name" value="Peptidase_M20A"/>
</dbReference>
<dbReference type="NCBIfam" id="TIGR01246">
    <property type="entry name" value="dapE_proteo"/>
    <property type="match status" value="1"/>
</dbReference>
<dbReference type="NCBIfam" id="NF009557">
    <property type="entry name" value="PRK13009.1"/>
    <property type="match status" value="1"/>
</dbReference>
<dbReference type="PANTHER" id="PTHR43808">
    <property type="entry name" value="ACETYLORNITHINE DEACETYLASE"/>
    <property type="match status" value="1"/>
</dbReference>
<dbReference type="PANTHER" id="PTHR43808:SF31">
    <property type="entry name" value="N-ACETYL-L-CITRULLINE DEACETYLASE"/>
    <property type="match status" value="1"/>
</dbReference>
<dbReference type="Pfam" id="PF07687">
    <property type="entry name" value="M20_dimer"/>
    <property type="match status" value="1"/>
</dbReference>
<dbReference type="Pfam" id="PF01546">
    <property type="entry name" value="Peptidase_M20"/>
    <property type="match status" value="1"/>
</dbReference>
<dbReference type="SUPFAM" id="SSF55031">
    <property type="entry name" value="Bacterial exopeptidase dimerisation domain"/>
    <property type="match status" value="1"/>
</dbReference>
<dbReference type="SUPFAM" id="SSF53187">
    <property type="entry name" value="Zn-dependent exopeptidases"/>
    <property type="match status" value="1"/>
</dbReference>
<dbReference type="PROSITE" id="PS00759">
    <property type="entry name" value="ARGE_DAPE_CPG2_2"/>
    <property type="match status" value="1"/>
</dbReference>
<accession>C4K2X8</accession>
<feature type="chain" id="PRO_1000215923" description="Succinyl-diaminopimelate desuccinylase">
    <location>
        <begin position="1"/>
        <end position="381"/>
    </location>
</feature>
<feature type="active site" evidence="1">
    <location>
        <position position="71"/>
    </location>
</feature>
<feature type="active site" description="Proton acceptor" evidence="1">
    <location>
        <position position="137"/>
    </location>
</feature>
<feature type="binding site" evidence="1">
    <location>
        <position position="69"/>
    </location>
    <ligand>
        <name>Zn(2+)</name>
        <dbReference type="ChEBI" id="CHEBI:29105"/>
        <label>1</label>
    </ligand>
</feature>
<feature type="binding site" evidence="1">
    <location>
        <position position="103"/>
    </location>
    <ligand>
        <name>Zn(2+)</name>
        <dbReference type="ChEBI" id="CHEBI:29105"/>
        <label>1</label>
    </ligand>
</feature>
<feature type="binding site" evidence="1">
    <location>
        <position position="103"/>
    </location>
    <ligand>
        <name>Zn(2+)</name>
        <dbReference type="ChEBI" id="CHEBI:29105"/>
        <label>2</label>
    </ligand>
</feature>
<feature type="binding site" evidence="1">
    <location>
        <position position="138"/>
    </location>
    <ligand>
        <name>Zn(2+)</name>
        <dbReference type="ChEBI" id="CHEBI:29105"/>
        <label>2</label>
    </ligand>
</feature>
<feature type="binding site" evidence="1">
    <location>
        <position position="166"/>
    </location>
    <ligand>
        <name>Zn(2+)</name>
        <dbReference type="ChEBI" id="CHEBI:29105"/>
        <label>1</label>
    </ligand>
</feature>
<feature type="binding site" evidence="1">
    <location>
        <position position="355"/>
    </location>
    <ligand>
        <name>Zn(2+)</name>
        <dbReference type="ChEBI" id="CHEBI:29105"/>
        <label>2</label>
    </ligand>
</feature>
<gene>
    <name evidence="1" type="primary">dapE</name>
    <name type="ordered locus">RPR_07630</name>
</gene>
<organism>
    <name type="scientific">Rickettsia peacockii (strain Rustic)</name>
    <dbReference type="NCBI Taxonomy" id="562019"/>
    <lineage>
        <taxon>Bacteria</taxon>
        <taxon>Pseudomonadati</taxon>
        <taxon>Pseudomonadota</taxon>
        <taxon>Alphaproteobacteria</taxon>
        <taxon>Rickettsiales</taxon>
        <taxon>Rickettsiaceae</taxon>
        <taxon>Rickettsieae</taxon>
        <taxon>Rickettsia</taxon>
        <taxon>spotted fever group</taxon>
    </lineage>
</organism>